<comment type="function">
    <text evidence="1">The surface protein (SU) attaches the virus to the host cell by binding to its receptor. This interaction triggers the refolding of the transmembrane protein (TM) and is thought to activate its fusogenic potential by unmasking its fusion peptide. Fusion occurs at the host cell plasma membrane (By similarity).</text>
</comment>
<comment type="function">
    <text evidence="1">The transmembrane protein (TM) acts as a class I viral fusion protein. Under the current model, the protein has at least 3 conformational states: pre-fusion native state, pre-hairpin intermediate state, and post-fusion hairpin state. During viral and target cell membrane fusion, the coiled coil regions (heptad repeats) assume a trimer-of-hairpins structure, positioning the fusion peptide in close proximity to the C-terminal region of the ectodomain. The formation of this structure appears to drive apposition and subsequent fusion of viral and target cell membranes. Membranes fusion leads to delivery of the nucleocapsid into the cytoplasm (By similarity).</text>
</comment>
<comment type="subunit">
    <text evidence="1">The mature envelope protein (Env) consists of a trimer of SU-TM heterodimers attached by noncovalent interactions or by a labile interchain disulfide bond.</text>
</comment>
<comment type="subcellular location">
    <molecule>Transmembrane protein</molecule>
    <subcellularLocation>
        <location evidence="1">Virion membrane</location>
        <topology evidence="1">Single-pass type I membrane protein</topology>
    </subcellularLocation>
    <subcellularLocation>
        <location evidence="1">Host cell membrane</location>
        <topology evidence="1">Single-pass type I membrane protein</topology>
    </subcellularLocation>
    <text evidence="1">It is probably concentrated at the site of budding and incorporated into the virions possibly by contacts between the cytoplasmic tail of Env and the N-terminus of Gag.</text>
</comment>
<comment type="subcellular location">
    <molecule>Surface protein</molecule>
    <subcellularLocation>
        <location evidence="1">Virion membrane</location>
        <topology evidence="1">Peripheral membrane protein</topology>
    </subcellularLocation>
    <subcellularLocation>
        <location evidence="1">Host cell membrane</location>
        <topology evidence="1">Peripheral membrane protein</topology>
    </subcellularLocation>
    <text evidence="1">The surface protein is not anchored to the viral envelope, but associates with the extravirion surface through its binding to TM. It is probably concentrated at the site of budding and incorporated into the virions possibly by contacts between the cytoplasmic tail of Env and the N-terminus of Gag (By similarity).</text>
</comment>
<comment type="PTM">
    <text evidence="1">Specific enzymatic cleavages in vivo yield mature proteins. Envelope glycoproteins are synthesized as an inactive precursor that is N-glycosylated and processed likely by host cell furin or by a furin-like protease in the Golgi to yield the mature SU and TM proteins. The cleavage site between SU and TM requires the minimal sequence [KR]-X-[KR]-R (By similarity).</text>
</comment>
<comment type="PTM">
    <text evidence="1">The transmembrane protein is palmitoylated.</text>
</comment>
<dbReference type="EMBL" id="M60609">
    <property type="protein sequence ID" value="AAA17527.1"/>
    <property type="status" value="ALT_SEQ"/>
    <property type="molecule type" value="Unassigned_RNA"/>
</dbReference>
<dbReference type="GlyCosmos" id="P23422">
    <property type="glycosylation" value="28 sites, No reported glycans"/>
</dbReference>
<dbReference type="GO" id="GO:0020002">
    <property type="term" value="C:host cell plasma membrane"/>
    <property type="evidence" value="ECO:0007669"/>
    <property type="project" value="UniProtKB-SubCell"/>
</dbReference>
<dbReference type="GO" id="GO:0016020">
    <property type="term" value="C:membrane"/>
    <property type="evidence" value="ECO:0007669"/>
    <property type="project" value="UniProtKB-KW"/>
</dbReference>
<dbReference type="GO" id="GO:0019031">
    <property type="term" value="C:viral envelope"/>
    <property type="evidence" value="ECO:0007669"/>
    <property type="project" value="UniProtKB-KW"/>
</dbReference>
<dbReference type="GO" id="GO:0055036">
    <property type="term" value="C:virion membrane"/>
    <property type="evidence" value="ECO:0007669"/>
    <property type="project" value="UniProtKB-SubCell"/>
</dbReference>
<dbReference type="GO" id="GO:0046718">
    <property type="term" value="P:symbiont entry into host cell"/>
    <property type="evidence" value="ECO:0007669"/>
    <property type="project" value="UniProtKB-KW"/>
</dbReference>
<dbReference type="GO" id="GO:0019062">
    <property type="term" value="P:virion attachment to host cell"/>
    <property type="evidence" value="ECO:0007669"/>
    <property type="project" value="UniProtKB-KW"/>
</dbReference>
<dbReference type="Gene3D" id="1.20.5.440">
    <property type="entry name" value="ATP synthase delta/epsilon subunit, C-terminal domain"/>
    <property type="match status" value="1"/>
</dbReference>
<dbReference type="SUPFAM" id="SSF58069">
    <property type="entry name" value="Virus ectodomain"/>
    <property type="match status" value="1"/>
</dbReference>
<name>ENV_VILV1</name>
<sequence length="989" mass="114798">MTSKESKPSRTTWRGMEPPLRETWNQVLQELVKRQQQEEEEQQGLVSGKKKSWVSIDLLGTEGKDIKKVNIWEPCEKWFAQVIWGVLWVLQIVLWGCLMWEMRKGNQCQAEEVIALVSDPGGFQRVQHVETVPVTCVTKNFTQWGCQPEGAYPDPELEYRNISREILEEVYKQDWPWNTYHWPLWQMENMRQWMKENEKEYKERTNKTKEDIDDLVAGRIRGRFCVPYPYALLRCEEWCWYPESINQETGHAEKIKINCTKAKAVSCTEKMPLAAVQRVYWEKEDEESMKFLNIKACNISLRCQDEGKSPGGCVQGYPIPKGAEIIPEAMKYLRGKKSRYGGIKDKNGELKLPLSVRVWVRMANLSGWVNGTPPYWSARVNGSTGINGTRWYGVGTLHHLGYNISSNPERGICDFTGELWIGGDKFPYYYKPSWNCSQNWTGHPVWQVFRYLDMTEHMTSRCIQRPERHNITVGNGTITGNCSVTNWDGCNCTRSGNHLYNSTSGGLLVIICRQNSTITGIMGTNTNWTTMWNIYQNCSKCNNSSLDRTGNGTLGTVNDLKCSLPHRNESNKWTCAARRKGSRRDSLYIAGRDFWGRVKAKYSCESNLGGLDSMMHQQMLLQRYQVIRVRAYTYGVVEMPQSYMEAQGENRRSRRNLQRKKRGIGLVIVLAIMAIIAAAGAGLGVANAVQQSYTRTAVQSLANATAAQQEVLEASYAMVQHIAKGIRILEARVARVEALVDRMMVYHELDCWHYQHYCVTSTRSEVANYVNWTRFKDNCTWQQWEEEIEQHEGNLSLLLREAALQVHIAQRDARRIPDAWKAIQEAFNWSSWFSWLKYIPWIIMGIVGLICFRILMCVISMCLQAYKQVKQIRYTQVTVVIEAPVELEEKQKRNGDGTNGCASLERERRTSHRSFIQIWRATWWAWKTSPWRHSWRTMPYITLLPMLVIWQWMEENGWNGENQHKKKKERVDCQDREQMPTLENDYVEL</sequence>
<organismHost>
    <name type="scientific">Ovis aries</name>
    <name type="common">Sheep</name>
    <dbReference type="NCBI Taxonomy" id="9940"/>
</organismHost>
<organism>
    <name type="scientific">Maedi visna virus (strain 1514 / clone LV1-1KS1)</name>
    <name type="common">MVV</name>
    <name type="synonym">Visna lentivirus</name>
    <dbReference type="NCBI Taxonomy" id="11743"/>
    <lineage>
        <taxon>Viruses</taxon>
        <taxon>Riboviria</taxon>
        <taxon>Pararnavirae</taxon>
        <taxon>Artverviricota</taxon>
        <taxon>Revtraviricetes</taxon>
        <taxon>Ortervirales</taxon>
        <taxon>Retroviridae</taxon>
        <taxon>Orthoretrovirinae</taxon>
        <taxon>Lentivirus</taxon>
        <taxon>Visna-maedi virus</taxon>
    </lineage>
</organism>
<protein>
    <recommendedName>
        <fullName>Envelope glycoprotein gp160</fullName>
    </recommendedName>
    <alternativeName>
        <fullName>Env polyprotein</fullName>
    </alternativeName>
    <component>
        <recommendedName>
            <fullName>Surface protein</fullName>
        </recommendedName>
        <alternativeName>
            <fullName>Glycoprotein 135</fullName>
            <shortName>gp135</shortName>
        </alternativeName>
    </component>
    <component>
        <recommendedName>
            <fullName>Transmembrane protein</fullName>
        </recommendedName>
        <alternativeName>
            <fullName>Glycoprotein 46</fullName>
            <shortName>gp46</shortName>
        </alternativeName>
    </component>
</protein>
<accession>P23422</accession>
<gene>
    <name type="primary">env</name>
</gene>
<feature type="signal peptide" evidence="2">
    <location>
        <begin position="1"/>
        <end position="106"/>
    </location>
</feature>
<feature type="chain" id="PRO_0000239541" description="Envelope glycoprotein gp160">
    <location>
        <begin position="107"/>
        <end position="989"/>
    </location>
</feature>
<feature type="chain" id="PRO_0000038738" description="Surface protein" evidence="1">
    <location>
        <begin position="107"/>
        <end position="662"/>
    </location>
</feature>
<feature type="chain" id="PRO_0000038739" description="Transmembrane protein" evidence="1">
    <location>
        <begin position="663"/>
        <end position="989"/>
    </location>
</feature>
<feature type="topological domain" description="Extracellular" evidence="2">
    <location>
        <begin position="107"/>
        <end position="838"/>
    </location>
</feature>
<feature type="transmembrane region" description="Helical" evidence="2">
    <location>
        <begin position="839"/>
        <end position="859"/>
    </location>
</feature>
<feature type="topological domain" description="Cytoplasmic" evidence="2">
    <location>
        <begin position="860"/>
        <end position="989"/>
    </location>
</feature>
<feature type="region of interest" description="Fusion peptide">
    <location>
        <begin position="663"/>
        <end position="683"/>
    </location>
</feature>
<feature type="region of interest" description="Immunosuppression" evidence="1">
    <location>
        <begin position="729"/>
        <end position="745"/>
    </location>
</feature>
<feature type="coiled-coil region" evidence="2">
    <location>
        <begin position="695"/>
        <end position="745"/>
    </location>
</feature>
<feature type="coiled-coil region" evidence="2">
    <location>
        <begin position="786"/>
        <end position="821"/>
    </location>
</feature>
<feature type="site" description="Cleavage; by host" evidence="1">
    <location>
        <begin position="662"/>
        <end position="663"/>
    </location>
</feature>
<feature type="lipid moiety-binding region" description="S-palmitoyl cysteine; by host" evidence="1">
    <location>
        <position position="862"/>
    </location>
</feature>
<feature type="glycosylation site" description="N-linked (GlcNAc...) asparagine; by host" evidence="2">
    <location>
        <position position="140"/>
    </location>
</feature>
<feature type="glycosylation site" description="N-linked (GlcNAc...) asparagine; by host" evidence="2">
    <location>
        <position position="161"/>
    </location>
</feature>
<feature type="glycosylation site" description="N-linked (GlcNAc...) asparagine; by host" evidence="2">
    <location>
        <position position="206"/>
    </location>
</feature>
<feature type="glycosylation site" description="N-linked (GlcNAc...) asparagine; by host" evidence="2">
    <location>
        <position position="258"/>
    </location>
</feature>
<feature type="glycosylation site" description="N-linked (GlcNAc...) asparagine; by host" evidence="2">
    <location>
        <position position="298"/>
    </location>
</feature>
<feature type="glycosylation site" description="N-linked (GlcNAc...) asparagine; by host" evidence="2">
    <location>
        <position position="364"/>
    </location>
</feature>
<feature type="glycosylation site" description="N-linked (GlcNAc...) asparagine; by host" evidence="2">
    <location>
        <position position="381"/>
    </location>
</feature>
<feature type="glycosylation site" description="N-linked (GlcNAc...) asparagine; by host" evidence="2">
    <location>
        <position position="387"/>
    </location>
</feature>
<feature type="glycosylation site" description="N-linked (GlcNAc...) asparagine; by host" evidence="2">
    <location>
        <position position="403"/>
    </location>
</feature>
<feature type="glycosylation site" description="N-linked (GlcNAc...) asparagine; by host" evidence="2">
    <location>
        <position position="435"/>
    </location>
</feature>
<feature type="glycosylation site" description="N-linked (GlcNAc...) asparagine; by host" evidence="2">
    <location>
        <position position="439"/>
    </location>
</feature>
<feature type="glycosylation site" description="N-linked (GlcNAc...) asparagine; by host" evidence="2">
    <location>
        <position position="470"/>
    </location>
</feature>
<feature type="glycosylation site" description="N-linked (GlcNAc...) asparagine; by host" evidence="2">
    <location>
        <position position="475"/>
    </location>
</feature>
<feature type="glycosylation site" description="N-linked (GlcNAc...) asparagine; by host" evidence="2">
    <location>
        <position position="481"/>
    </location>
</feature>
<feature type="glycosylation site" description="N-linked (GlcNAc...) asparagine; by host" evidence="2">
    <location>
        <position position="491"/>
    </location>
</feature>
<feature type="glycosylation site" description="N-linked (GlcNAc...) asparagine; by host" evidence="2">
    <location>
        <position position="501"/>
    </location>
</feature>
<feature type="glycosylation site" description="N-linked (GlcNAc...) asparagine; by host" evidence="2">
    <location>
        <position position="515"/>
    </location>
</feature>
<feature type="glycosylation site" description="N-linked (GlcNAc...) asparagine; by host" evidence="2">
    <location>
        <position position="527"/>
    </location>
</feature>
<feature type="glycosylation site" description="N-linked (GlcNAc...) asparagine; by host" evidence="2">
    <location>
        <position position="537"/>
    </location>
</feature>
<feature type="glycosylation site" description="N-linked (GlcNAc...) asparagine; by host" evidence="2">
    <location>
        <position position="542"/>
    </location>
</feature>
<feature type="glycosylation site" description="N-linked (GlcNAc...) asparagine; by host" evidence="2">
    <location>
        <position position="543"/>
    </location>
</feature>
<feature type="glycosylation site" description="N-linked (GlcNAc...) asparagine; by host" evidence="2">
    <location>
        <position position="551"/>
    </location>
</feature>
<feature type="glycosylation site" description="N-linked (GlcNAc...) asparagine; by host" evidence="2">
    <location>
        <position position="568"/>
    </location>
</feature>
<feature type="glycosylation site" description="N-linked (GlcNAc...) asparagine; by host" evidence="2">
    <location>
        <position position="703"/>
    </location>
</feature>
<feature type="glycosylation site" description="N-linked (GlcNAc...) asparagine; by host" evidence="2">
    <location>
        <position position="771"/>
    </location>
</feature>
<feature type="glycosylation site" description="N-linked (GlcNAc...) asparagine; by host" evidence="2">
    <location>
        <position position="778"/>
    </location>
</feature>
<feature type="glycosylation site" description="N-linked (GlcNAc...) asparagine; by host" evidence="2">
    <location>
        <position position="794"/>
    </location>
</feature>
<feature type="glycosylation site" description="N-linked (GlcNAc...) asparagine; by host" evidence="2">
    <location>
        <position position="828"/>
    </location>
</feature>
<proteinExistence type="inferred from homology"/>
<reference key="1">
    <citation type="journal article" date="1991" name="Virology">
        <title>Isolation of replication-competent molecular clones of visna virus.</title>
        <authorList>
            <person name="Staskus K.A."/>
            <person name="Retzel E.F."/>
            <person name="Lewis E.D."/>
            <person name="Wietgrefe S.W."/>
            <person name="Silsby J.L."/>
            <person name="Cyr S."/>
            <person name="Rank J.M."/>
            <person name="Haase A.T."/>
            <person name="Fast D."/>
            <person name="Geiser P.T."/>
            <person name="Harty J.T."/>
            <person name="Kong S.H."/>
            <person name="Cook R."/>
            <person name="Lahti C.J."/>
            <person name="Neufeld T.P."/>
            <person name="Porter T.E."/>
            <person name="Shoop E."/>
            <person name="Zachow K.R."/>
        </authorList>
    </citation>
    <scope>NUCLEOTIDE SEQUENCE</scope>
</reference>
<keyword id="KW-0165">Cleavage on pair of basic residues</keyword>
<keyword id="KW-0175">Coiled coil</keyword>
<keyword id="KW-1015">Disulfide bond</keyword>
<keyword id="KW-0325">Glycoprotein</keyword>
<keyword id="KW-1032">Host cell membrane</keyword>
<keyword id="KW-1043">Host membrane</keyword>
<keyword id="KW-0945">Host-virus interaction</keyword>
<keyword id="KW-0449">Lipoprotein</keyword>
<keyword id="KW-0472">Membrane</keyword>
<keyword id="KW-0564">Palmitate</keyword>
<keyword id="KW-0732">Signal</keyword>
<keyword id="KW-0812">Transmembrane</keyword>
<keyword id="KW-1133">Transmembrane helix</keyword>
<keyword id="KW-1161">Viral attachment to host cell</keyword>
<keyword id="KW-0261">Viral envelope protein</keyword>
<keyword id="KW-0946">Virion</keyword>
<keyword id="KW-1160">Virus entry into host cell</keyword>
<evidence type="ECO:0000250" key="1"/>
<evidence type="ECO:0000255" key="2"/>